<reference key="1">
    <citation type="submission" date="2007-11" db="EMBL/GenBank/DDBJ databases">
        <title>Complete sequence of Petroga mobilis SJ95.</title>
        <authorList>
            <consortium name="US DOE Joint Genome Institute"/>
            <person name="Copeland A."/>
            <person name="Lucas S."/>
            <person name="Lapidus A."/>
            <person name="Barry K."/>
            <person name="Glavina del Rio T."/>
            <person name="Dalin E."/>
            <person name="Tice H."/>
            <person name="Pitluck S."/>
            <person name="Meincke L."/>
            <person name="Brettin T."/>
            <person name="Bruce D."/>
            <person name="Detter J.C."/>
            <person name="Han C."/>
            <person name="Kuske C.R."/>
            <person name="Schmutz J."/>
            <person name="Larimer F."/>
            <person name="Land M."/>
            <person name="Hauser L."/>
            <person name="Kyrpides N."/>
            <person name="Mikhailova N."/>
            <person name="Noll K."/>
            <person name="Richardson P."/>
        </authorList>
    </citation>
    <scope>NUCLEOTIDE SEQUENCE [LARGE SCALE GENOMIC DNA]</scope>
    <source>
        <strain>DSM 10674 / SJ95</strain>
    </source>
</reference>
<sequence>MQDQKGKIISVIGPVVDVKFPEGQLPNVYDALKVKNEYSGEELILEVEQLIGDDTARCVAMDSTDGIRRGQEVINTLEPIKVPVGDTTLGRMVNLLGKPIDEKGDVEGEEYWPIHRDPPSLNEQDTSIEILETGIKCIDLLAPFPRGGKIGFFGGAGVGKTVLVMELIRNIAKEHQGISVFAGVGERTREGNDLWLEMQETGVIDSTALVFGQMNEPPGARFRVPLTALTISEYFRDRQKKDVLLFIDNIFRFVQAGSEVSALLGRMPSAVGYQPTLASDMGQLQERITSTKDGSITSVQAIYVPADDFTDPAPATTFAHLDANINLSRRQSELGLYPAVDPLDSTSKMLDPNVVGQDHYSVAREVKEVLQRYEDLQDIIAILGIEELSEEDRQIVNRARRIQRFLTQPFFVAERFTNYSGKYVNVEDTIKGFKEILEGKHDDLPESAFYMVGTIEEAVEKAKKMNE</sequence>
<organism>
    <name type="scientific">Petrotoga mobilis (strain DSM 10674 / SJ95)</name>
    <dbReference type="NCBI Taxonomy" id="403833"/>
    <lineage>
        <taxon>Bacteria</taxon>
        <taxon>Thermotogati</taxon>
        <taxon>Thermotogota</taxon>
        <taxon>Thermotogae</taxon>
        <taxon>Petrotogales</taxon>
        <taxon>Petrotogaceae</taxon>
        <taxon>Petrotoga</taxon>
    </lineage>
</organism>
<evidence type="ECO:0000255" key="1">
    <source>
        <dbReference type="HAMAP-Rule" id="MF_01347"/>
    </source>
</evidence>
<accession>A9BFX3</accession>
<feature type="chain" id="PRO_0000339568" description="ATP synthase subunit beta">
    <location>
        <begin position="1"/>
        <end position="467"/>
    </location>
</feature>
<feature type="binding site" evidence="1">
    <location>
        <begin position="154"/>
        <end position="161"/>
    </location>
    <ligand>
        <name>ATP</name>
        <dbReference type="ChEBI" id="CHEBI:30616"/>
    </ligand>
</feature>
<comment type="function">
    <text evidence="1">Produces ATP from ADP in the presence of a proton gradient across the membrane. The catalytic sites are hosted primarily by the beta subunits.</text>
</comment>
<comment type="catalytic activity">
    <reaction evidence="1">
        <text>ATP + H2O + 4 H(+)(in) = ADP + phosphate + 5 H(+)(out)</text>
        <dbReference type="Rhea" id="RHEA:57720"/>
        <dbReference type="ChEBI" id="CHEBI:15377"/>
        <dbReference type="ChEBI" id="CHEBI:15378"/>
        <dbReference type="ChEBI" id="CHEBI:30616"/>
        <dbReference type="ChEBI" id="CHEBI:43474"/>
        <dbReference type="ChEBI" id="CHEBI:456216"/>
        <dbReference type="EC" id="7.1.2.2"/>
    </reaction>
</comment>
<comment type="subunit">
    <text evidence="1">F-type ATPases have 2 components, CF(1) - the catalytic core - and CF(0) - the membrane proton channel. CF(1) has five subunits: alpha(3), beta(3), gamma(1), delta(1), epsilon(1). CF(0) has three main subunits: a(1), b(2) and c(9-12). The alpha and beta chains form an alternating ring which encloses part of the gamma chain. CF(1) is attached to CF(0) by a central stalk formed by the gamma and epsilon chains, while a peripheral stalk is formed by the delta and b chains.</text>
</comment>
<comment type="subcellular location">
    <subcellularLocation>
        <location evidence="1">Cell inner membrane</location>
        <topology evidence="1">Peripheral membrane protein</topology>
    </subcellularLocation>
</comment>
<comment type="similarity">
    <text evidence="1">Belongs to the ATPase alpha/beta chains family.</text>
</comment>
<dbReference type="EC" id="7.1.2.2" evidence="1"/>
<dbReference type="EMBL" id="CP000879">
    <property type="protein sequence ID" value="ABX31469.1"/>
    <property type="molecule type" value="Genomic_DNA"/>
</dbReference>
<dbReference type="RefSeq" id="WP_012208572.1">
    <property type="nucleotide sequence ID" value="NC_010003.1"/>
</dbReference>
<dbReference type="SMR" id="A9BFX3"/>
<dbReference type="STRING" id="403833.Pmob_0745"/>
<dbReference type="KEGG" id="pmo:Pmob_0745"/>
<dbReference type="eggNOG" id="COG0055">
    <property type="taxonomic scope" value="Bacteria"/>
</dbReference>
<dbReference type="HOGENOM" id="CLU_022398_0_2_0"/>
<dbReference type="OrthoDB" id="9801639at2"/>
<dbReference type="Proteomes" id="UP000000789">
    <property type="component" value="Chromosome"/>
</dbReference>
<dbReference type="GO" id="GO:0005886">
    <property type="term" value="C:plasma membrane"/>
    <property type="evidence" value="ECO:0007669"/>
    <property type="project" value="UniProtKB-SubCell"/>
</dbReference>
<dbReference type="GO" id="GO:0045259">
    <property type="term" value="C:proton-transporting ATP synthase complex"/>
    <property type="evidence" value="ECO:0007669"/>
    <property type="project" value="UniProtKB-KW"/>
</dbReference>
<dbReference type="GO" id="GO:0005524">
    <property type="term" value="F:ATP binding"/>
    <property type="evidence" value="ECO:0007669"/>
    <property type="project" value="UniProtKB-UniRule"/>
</dbReference>
<dbReference type="GO" id="GO:0016887">
    <property type="term" value="F:ATP hydrolysis activity"/>
    <property type="evidence" value="ECO:0007669"/>
    <property type="project" value="InterPro"/>
</dbReference>
<dbReference type="GO" id="GO:0046933">
    <property type="term" value="F:proton-transporting ATP synthase activity, rotational mechanism"/>
    <property type="evidence" value="ECO:0007669"/>
    <property type="project" value="UniProtKB-UniRule"/>
</dbReference>
<dbReference type="CDD" id="cd18110">
    <property type="entry name" value="ATP-synt_F1_beta_C"/>
    <property type="match status" value="1"/>
</dbReference>
<dbReference type="CDD" id="cd18115">
    <property type="entry name" value="ATP-synt_F1_beta_N"/>
    <property type="match status" value="1"/>
</dbReference>
<dbReference type="CDD" id="cd01133">
    <property type="entry name" value="F1-ATPase_beta_CD"/>
    <property type="match status" value="1"/>
</dbReference>
<dbReference type="FunFam" id="1.10.1140.10:FF:000001">
    <property type="entry name" value="ATP synthase subunit beta"/>
    <property type="match status" value="1"/>
</dbReference>
<dbReference type="FunFam" id="3.40.50.300:FF:000004">
    <property type="entry name" value="ATP synthase subunit beta"/>
    <property type="match status" value="1"/>
</dbReference>
<dbReference type="Gene3D" id="2.40.10.170">
    <property type="match status" value="1"/>
</dbReference>
<dbReference type="Gene3D" id="1.10.1140.10">
    <property type="entry name" value="Bovine Mitochondrial F1-atpase, Atp Synthase Beta Chain, Chain D, domain 3"/>
    <property type="match status" value="1"/>
</dbReference>
<dbReference type="Gene3D" id="3.40.50.300">
    <property type="entry name" value="P-loop containing nucleotide triphosphate hydrolases"/>
    <property type="match status" value="1"/>
</dbReference>
<dbReference type="HAMAP" id="MF_01347">
    <property type="entry name" value="ATP_synth_beta_bact"/>
    <property type="match status" value="1"/>
</dbReference>
<dbReference type="InterPro" id="IPR003593">
    <property type="entry name" value="AAA+_ATPase"/>
</dbReference>
<dbReference type="InterPro" id="IPR055190">
    <property type="entry name" value="ATP-synt_VA_C"/>
</dbReference>
<dbReference type="InterPro" id="IPR005722">
    <property type="entry name" value="ATP_synth_F1_bsu"/>
</dbReference>
<dbReference type="InterPro" id="IPR020003">
    <property type="entry name" value="ATPase_a/bsu_AS"/>
</dbReference>
<dbReference type="InterPro" id="IPR050053">
    <property type="entry name" value="ATPase_alpha/beta_chains"/>
</dbReference>
<dbReference type="InterPro" id="IPR004100">
    <property type="entry name" value="ATPase_F1/V1/A1_a/bsu_N"/>
</dbReference>
<dbReference type="InterPro" id="IPR036121">
    <property type="entry name" value="ATPase_F1/V1/A1_a/bsu_N_sf"/>
</dbReference>
<dbReference type="InterPro" id="IPR000194">
    <property type="entry name" value="ATPase_F1/V1/A1_a/bsu_nucl-bd"/>
</dbReference>
<dbReference type="InterPro" id="IPR024034">
    <property type="entry name" value="ATPase_F1/V1_b/a_C"/>
</dbReference>
<dbReference type="InterPro" id="IPR027417">
    <property type="entry name" value="P-loop_NTPase"/>
</dbReference>
<dbReference type="NCBIfam" id="TIGR01039">
    <property type="entry name" value="atpD"/>
    <property type="match status" value="1"/>
</dbReference>
<dbReference type="PANTHER" id="PTHR15184">
    <property type="entry name" value="ATP SYNTHASE"/>
    <property type="match status" value="1"/>
</dbReference>
<dbReference type="PANTHER" id="PTHR15184:SF71">
    <property type="entry name" value="ATP SYNTHASE SUBUNIT BETA, MITOCHONDRIAL"/>
    <property type="match status" value="1"/>
</dbReference>
<dbReference type="Pfam" id="PF00006">
    <property type="entry name" value="ATP-synt_ab"/>
    <property type="match status" value="1"/>
</dbReference>
<dbReference type="Pfam" id="PF02874">
    <property type="entry name" value="ATP-synt_ab_N"/>
    <property type="match status" value="1"/>
</dbReference>
<dbReference type="Pfam" id="PF22919">
    <property type="entry name" value="ATP-synt_VA_C"/>
    <property type="match status" value="1"/>
</dbReference>
<dbReference type="SMART" id="SM00382">
    <property type="entry name" value="AAA"/>
    <property type="match status" value="1"/>
</dbReference>
<dbReference type="SUPFAM" id="SSF47917">
    <property type="entry name" value="C-terminal domain of alpha and beta subunits of F1 ATP synthase"/>
    <property type="match status" value="1"/>
</dbReference>
<dbReference type="SUPFAM" id="SSF50615">
    <property type="entry name" value="N-terminal domain of alpha and beta subunits of F1 ATP synthase"/>
    <property type="match status" value="1"/>
</dbReference>
<dbReference type="SUPFAM" id="SSF52540">
    <property type="entry name" value="P-loop containing nucleoside triphosphate hydrolases"/>
    <property type="match status" value="1"/>
</dbReference>
<dbReference type="PROSITE" id="PS00152">
    <property type="entry name" value="ATPASE_ALPHA_BETA"/>
    <property type="match status" value="1"/>
</dbReference>
<keyword id="KW-0066">ATP synthesis</keyword>
<keyword id="KW-0067">ATP-binding</keyword>
<keyword id="KW-0997">Cell inner membrane</keyword>
<keyword id="KW-1003">Cell membrane</keyword>
<keyword id="KW-0139">CF(1)</keyword>
<keyword id="KW-0375">Hydrogen ion transport</keyword>
<keyword id="KW-0406">Ion transport</keyword>
<keyword id="KW-0472">Membrane</keyword>
<keyword id="KW-0547">Nucleotide-binding</keyword>
<keyword id="KW-1278">Translocase</keyword>
<keyword id="KW-0813">Transport</keyword>
<name>ATPB_PETMO</name>
<protein>
    <recommendedName>
        <fullName evidence="1">ATP synthase subunit beta</fullName>
        <ecNumber evidence="1">7.1.2.2</ecNumber>
    </recommendedName>
    <alternativeName>
        <fullName evidence="1">ATP synthase F1 sector subunit beta</fullName>
    </alternativeName>
    <alternativeName>
        <fullName evidence="1">F-ATPase subunit beta</fullName>
    </alternativeName>
</protein>
<gene>
    <name evidence="1" type="primary">atpD</name>
    <name type="ordered locus">Pmob_0745</name>
</gene>
<proteinExistence type="inferred from homology"/>